<sequence>MATQGVLAKYRLPPLPTIGEIIKLFNLRAEKQLSQNFLLDLKLTDKIVRKAGNLQNAYVCEVGPGPGGITRSILNAGVEELLVVEKDTRFIPGLKMLNEASSGKVQIVHGDILTYRMDRAFPKHLKKPWDDDPPNVHIIGNLPFSVSTPLIIKWLEQLADRTGPFTYGRTQMTLTFQKEVAERLTASTSSKQRSRLSIMAQNLCNVKNCFTIPGRAFVPKPEVDVGVVHFTPFIQPKIEQPFKVVEKVVRSVFQFRRKYCHHGVSILFPEESRLKCTEQMLRLADVDPTLRPTELTMTHFKKLCNVYREMCDQNPNLFAYNFREELRMRKLQGKTTEEGEEDDLQR</sequence>
<dbReference type="EC" id="2.1.1.-" evidence="2"/>
<dbReference type="EMBL" id="CR760823">
    <property type="protein sequence ID" value="CAJ83142.1"/>
    <property type="molecule type" value="mRNA"/>
</dbReference>
<dbReference type="RefSeq" id="NP_001016494.1">
    <property type="nucleotide sequence ID" value="NM_001016494.2"/>
</dbReference>
<dbReference type="RefSeq" id="XP_012827224.2">
    <property type="nucleotide sequence ID" value="XM_012971770.3"/>
</dbReference>
<dbReference type="RefSeq" id="XP_031749946.1">
    <property type="nucleotide sequence ID" value="XM_031894086.1"/>
</dbReference>
<dbReference type="SMR" id="Q28HM1"/>
<dbReference type="FunCoup" id="Q28HM1">
    <property type="interactions" value="277"/>
</dbReference>
<dbReference type="STRING" id="8364.ENSXETP00000048302"/>
<dbReference type="PaxDb" id="8364-ENSXETP00000017166"/>
<dbReference type="GeneID" id="549248"/>
<dbReference type="KEGG" id="xtr:549248"/>
<dbReference type="AGR" id="Xenbase:XB-GENE-5721420"/>
<dbReference type="CTD" id="51106"/>
<dbReference type="Xenbase" id="XB-GENE-5721420">
    <property type="gene designation" value="tfb1m"/>
</dbReference>
<dbReference type="eggNOG" id="KOG0821">
    <property type="taxonomic scope" value="Eukaryota"/>
</dbReference>
<dbReference type="InParanoid" id="Q28HM1"/>
<dbReference type="OMA" id="RIEQPFK"/>
<dbReference type="OrthoDB" id="16079at2759"/>
<dbReference type="Proteomes" id="UP000008143">
    <property type="component" value="Chromosome 10"/>
</dbReference>
<dbReference type="Bgee" id="ENSXETG00000007852">
    <property type="expression patterns" value="Expressed in egg cell and 19 other cell types or tissues"/>
</dbReference>
<dbReference type="GO" id="GO:0005739">
    <property type="term" value="C:mitochondrion"/>
    <property type="evidence" value="ECO:0007669"/>
    <property type="project" value="UniProtKB-SubCell"/>
</dbReference>
<dbReference type="GO" id="GO:0003677">
    <property type="term" value="F:DNA binding"/>
    <property type="evidence" value="ECO:0007669"/>
    <property type="project" value="UniProtKB-KW"/>
</dbReference>
<dbReference type="GO" id="GO:0003723">
    <property type="term" value="F:RNA binding"/>
    <property type="evidence" value="ECO:0007669"/>
    <property type="project" value="UniProtKB-KW"/>
</dbReference>
<dbReference type="GO" id="GO:0000179">
    <property type="term" value="F:rRNA (adenine-N6,N6-)-dimethyltransferase activity"/>
    <property type="evidence" value="ECO:0000250"/>
    <property type="project" value="UniProtKB"/>
</dbReference>
<dbReference type="GO" id="GO:1904047">
    <property type="term" value="F:S-adenosyl-L-methionine binding"/>
    <property type="evidence" value="ECO:0000250"/>
    <property type="project" value="UniProtKB"/>
</dbReference>
<dbReference type="GO" id="GO:0031167">
    <property type="term" value="P:rRNA methylation"/>
    <property type="evidence" value="ECO:0000250"/>
    <property type="project" value="UniProtKB"/>
</dbReference>
<dbReference type="CDD" id="cd02440">
    <property type="entry name" value="AdoMet_MTases"/>
    <property type="match status" value="1"/>
</dbReference>
<dbReference type="FunFam" id="1.10.8.100:FF:000004">
    <property type="entry name" value="rRNA adenine N(6)-methyltransferase"/>
    <property type="match status" value="1"/>
</dbReference>
<dbReference type="FunFam" id="3.40.50.150:FF:000109">
    <property type="entry name" value="rRNA adenine N(6)-methyltransferase"/>
    <property type="match status" value="1"/>
</dbReference>
<dbReference type="Gene3D" id="1.10.8.100">
    <property type="entry name" value="Ribosomal RNA adenine dimethylase-like, domain 2"/>
    <property type="match status" value="1"/>
</dbReference>
<dbReference type="Gene3D" id="3.40.50.150">
    <property type="entry name" value="Vaccinia Virus protein VP39"/>
    <property type="match status" value="1"/>
</dbReference>
<dbReference type="InterPro" id="IPR001737">
    <property type="entry name" value="KsgA/Erm"/>
</dbReference>
<dbReference type="InterPro" id="IPR023165">
    <property type="entry name" value="rRNA_Ade_diMease-like_C"/>
</dbReference>
<dbReference type="InterPro" id="IPR020598">
    <property type="entry name" value="rRNA_Ade_methylase_Trfase_N"/>
</dbReference>
<dbReference type="InterPro" id="IPR011530">
    <property type="entry name" value="rRNA_adenine_dimethylase"/>
</dbReference>
<dbReference type="InterPro" id="IPR029063">
    <property type="entry name" value="SAM-dependent_MTases_sf"/>
</dbReference>
<dbReference type="NCBIfam" id="TIGR00755">
    <property type="entry name" value="ksgA"/>
    <property type="match status" value="1"/>
</dbReference>
<dbReference type="PANTHER" id="PTHR11727">
    <property type="entry name" value="DIMETHYLADENOSINE TRANSFERASE"/>
    <property type="match status" value="1"/>
</dbReference>
<dbReference type="PANTHER" id="PTHR11727:SF17">
    <property type="entry name" value="DIMETHYLADENOSINE TRANSFERASE 1, MITOCHONDRIAL"/>
    <property type="match status" value="1"/>
</dbReference>
<dbReference type="Pfam" id="PF00398">
    <property type="entry name" value="RrnaAD"/>
    <property type="match status" value="1"/>
</dbReference>
<dbReference type="SMART" id="SM00650">
    <property type="entry name" value="rADc"/>
    <property type="match status" value="1"/>
</dbReference>
<dbReference type="SUPFAM" id="SSF53335">
    <property type="entry name" value="S-adenosyl-L-methionine-dependent methyltransferases"/>
    <property type="match status" value="1"/>
</dbReference>
<dbReference type="PROSITE" id="PS51689">
    <property type="entry name" value="SAM_RNA_A_N6_MT"/>
    <property type="match status" value="1"/>
</dbReference>
<organism>
    <name type="scientific">Xenopus tropicalis</name>
    <name type="common">Western clawed frog</name>
    <name type="synonym">Silurana tropicalis</name>
    <dbReference type="NCBI Taxonomy" id="8364"/>
    <lineage>
        <taxon>Eukaryota</taxon>
        <taxon>Metazoa</taxon>
        <taxon>Chordata</taxon>
        <taxon>Craniata</taxon>
        <taxon>Vertebrata</taxon>
        <taxon>Euteleostomi</taxon>
        <taxon>Amphibia</taxon>
        <taxon>Batrachia</taxon>
        <taxon>Anura</taxon>
        <taxon>Pipoidea</taxon>
        <taxon>Pipidae</taxon>
        <taxon>Xenopodinae</taxon>
        <taxon>Xenopus</taxon>
        <taxon>Silurana</taxon>
    </lineage>
</organism>
<comment type="function">
    <text evidence="2">Mitochondrial methyltransferase which uses S-adenosyl methionine to dimethylate two highly conserved adjacent adenosine residues (A1583 and A1584) within the loop of helix 45 at the 3-prime end of 12S rRNA, thereby regulating the assembly or stability of the small subunit of the mitochondrial ribosome. Also required for basal transcription of mitochondrial DNA, probably via its interaction with POLRMT and TFAM. Stimulates transcription independently of the methyltransferase activity.</text>
</comment>
<comment type="catalytic activity">
    <reaction evidence="2">
        <text>adenosine(N)/adenosine(N+1) in rRNA + 4 S-adenosyl-L-methionine = N(6)-dimethyladenosine(N)/N(6)-dimethyladenosine(N+1) in rRNA + 4 S-adenosyl-L-homocysteine + 4 H(+)</text>
        <dbReference type="Rhea" id="RHEA:78527"/>
        <dbReference type="Rhea" id="RHEA-COMP:19105"/>
        <dbReference type="Rhea" id="RHEA-COMP:19106"/>
        <dbReference type="ChEBI" id="CHEBI:15378"/>
        <dbReference type="ChEBI" id="CHEBI:57856"/>
        <dbReference type="ChEBI" id="CHEBI:59789"/>
        <dbReference type="ChEBI" id="CHEBI:74411"/>
        <dbReference type="ChEBI" id="CHEBI:74493"/>
    </reaction>
</comment>
<comment type="subcellular location">
    <subcellularLocation>
        <location evidence="2">Mitochondrion</location>
    </subcellularLocation>
</comment>
<comment type="similarity">
    <text evidence="4">Belongs to the class I-like SAM-binding methyltransferase superfamily. rRNA adenine N(6)-methyltransferase family. KsgA subfamily.</text>
</comment>
<feature type="transit peptide" description="Mitochondrion" evidence="3">
    <location>
        <begin position="1"/>
        <end position="27"/>
    </location>
</feature>
<feature type="chain" id="PRO_0000273177" description="Dimethyladenosine transferase 1, mitochondrial">
    <location>
        <begin position="28"/>
        <end position="346"/>
    </location>
</feature>
<feature type="binding site" evidence="1">
    <location>
        <position position="36"/>
    </location>
    <ligand>
        <name>S-adenosyl-L-methionine</name>
        <dbReference type="ChEBI" id="CHEBI:59789"/>
    </ligand>
</feature>
<feature type="binding site" evidence="1">
    <location>
        <position position="38"/>
    </location>
    <ligand>
        <name>S-adenosyl-L-methionine</name>
        <dbReference type="ChEBI" id="CHEBI:59789"/>
    </ligand>
</feature>
<feature type="binding site" evidence="1">
    <location>
        <position position="63"/>
    </location>
    <ligand>
        <name>S-adenosyl-L-methionine</name>
        <dbReference type="ChEBI" id="CHEBI:59789"/>
    </ligand>
</feature>
<feature type="binding site" evidence="1">
    <location>
        <position position="85"/>
    </location>
    <ligand>
        <name>S-adenosyl-L-methionine</name>
        <dbReference type="ChEBI" id="CHEBI:59789"/>
    </ligand>
</feature>
<feature type="binding site" evidence="1">
    <location>
        <position position="86"/>
    </location>
    <ligand>
        <name>S-adenosyl-L-methionine</name>
        <dbReference type="ChEBI" id="CHEBI:59789"/>
    </ligand>
</feature>
<feature type="binding site" evidence="1">
    <location>
        <position position="111"/>
    </location>
    <ligand>
        <name>S-adenosyl-L-methionine</name>
        <dbReference type="ChEBI" id="CHEBI:59789"/>
    </ligand>
</feature>
<feature type="binding site" evidence="1">
    <location>
        <position position="112"/>
    </location>
    <ligand>
        <name>S-adenosyl-L-methionine</name>
        <dbReference type="ChEBI" id="CHEBI:59789"/>
    </ligand>
</feature>
<feature type="binding site" evidence="1">
    <location>
        <position position="141"/>
    </location>
    <ligand>
        <name>S-adenosyl-L-methionine</name>
        <dbReference type="ChEBI" id="CHEBI:59789"/>
    </ligand>
</feature>
<accession>Q28HM1</accession>
<reference key="1">
    <citation type="submission" date="2006-10" db="EMBL/GenBank/DDBJ databases">
        <authorList>
            <consortium name="Sanger Xenopus tropicalis EST/cDNA project"/>
        </authorList>
    </citation>
    <scope>NUCLEOTIDE SEQUENCE [LARGE SCALE MRNA]</scope>
    <source>
        <tissue>Tadpole</tissue>
    </source>
</reference>
<protein>
    <recommendedName>
        <fullName>Dimethyladenosine transferase 1, mitochondrial</fullName>
        <ecNumber evidence="2">2.1.1.-</ecNumber>
    </recommendedName>
    <alternativeName>
        <fullName>Mitochondrial 12S rRNA dimethylase 1</fullName>
    </alternativeName>
    <alternativeName>
        <fullName>Mitochondrial transcription factor B1</fullName>
        <shortName>mtTFB1</shortName>
    </alternativeName>
    <alternativeName>
        <fullName>S-adenosylmethionine-6-N', N'-adenosyl(rRNA) dimethyltransferase 1</fullName>
    </alternativeName>
</protein>
<gene>
    <name type="primary">tfb1m</name>
    <name type="ORF">TTpA018f13.1</name>
</gene>
<evidence type="ECO:0000250" key="1">
    <source>
        <dbReference type="UniProtKB" id="Q8JZM0"/>
    </source>
</evidence>
<evidence type="ECO:0000250" key="2">
    <source>
        <dbReference type="UniProtKB" id="Q8WVM0"/>
    </source>
</evidence>
<evidence type="ECO:0000255" key="3"/>
<evidence type="ECO:0000255" key="4">
    <source>
        <dbReference type="PROSITE-ProRule" id="PRU01026"/>
    </source>
</evidence>
<keyword id="KW-0238">DNA-binding</keyword>
<keyword id="KW-0489">Methyltransferase</keyword>
<keyword id="KW-0496">Mitochondrion</keyword>
<keyword id="KW-1185">Reference proteome</keyword>
<keyword id="KW-0694">RNA-binding</keyword>
<keyword id="KW-0698">rRNA processing</keyword>
<keyword id="KW-0949">S-adenosyl-L-methionine</keyword>
<keyword id="KW-0804">Transcription</keyword>
<keyword id="KW-0805">Transcription regulation</keyword>
<keyword id="KW-0808">Transferase</keyword>
<keyword id="KW-0809">Transit peptide</keyword>
<name>TFB1M_XENTR</name>
<proteinExistence type="evidence at transcript level"/>